<accession>P24645</accession>
<organism>
    <name type="scientific">Calliophis bivirgatus</name>
    <name type="common">Blue Malaysian coral snake</name>
    <name type="synonym">Maticora bivirgata</name>
    <dbReference type="NCBI Taxonomy" id="8633"/>
    <lineage>
        <taxon>Eukaryota</taxon>
        <taxon>Metazoa</taxon>
        <taxon>Chordata</taxon>
        <taxon>Craniata</taxon>
        <taxon>Vertebrata</taxon>
        <taxon>Euteleostomi</taxon>
        <taxon>Lepidosauria</taxon>
        <taxon>Squamata</taxon>
        <taxon>Bifurcata</taxon>
        <taxon>Unidentata</taxon>
        <taxon>Episquamata</taxon>
        <taxon>Toxicofera</taxon>
        <taxon>Serpentes</taxon>
        <taxon>Colubroidea</taxon>
        <taxon>Elapidae</taxon>
        <taxon>Elapinae</taxon>
        <taxon>Calliophis</taxon>
    </lineage>
</organism>
<sequence length="38" mass="4248">NLYQFGNMIKCTIPKRLSWRSFVDYGCYCGKGGSGTPV</sequence>
<evidence type="ECO:0000250" key="1"/>
<evidence type="ECO:0000255" key="2">
    <source>
        <dbReference type="PROSITE-ProRule" id="PRU10035"/>
    </source>
</evidence>
<evidence type="ECO:0000255" key="3">
    <source>
        <dbReference type="PROSITE-ProRule" id="PRU10036"/>
    </source>
</evidence>
<evidence type="ECO:0000305" key="4"/>
<feature type="chain" id="PRO_0000161656" description="Phospholipase A2 2">
    <location>
        <begin position="1"/>
        <end position="38" status="greater than"/>
    </location>
</feature>
<feature type="binding site" evidence="1">
    <location>
        <position position="28"/>
    </location>
    <ligand>
        <name>Ca(2+)</name>
        <dbReference type="ChEBI" id="CHEBI:29108"/>
    </ligand>
</feature>
<feature type="binding site" evidence="1">
    <location>
        <position position="30"/>
    </location>
    <ligand>
        <name>Ca(2+)</name>
        <dbReference type="ChEBI" id="CHEBI:29108"/>
    </ligand>
</feature>
<feature type="binding site" evidence="1">
    <location>
        <position position="32"/>
    </location>
    <ligand>
        <name>Ca(2+)</name>
        <dbReference type="ChEBI" id="CHEBI:29108"/>
    </ligand>
</feature>
<feature type="non-terminal residue">
    <location>
        <position position="38"/>
    </location>
</feature>
<keyword id="KW-0106">Calcium</keyword>
<keyword id="KW-0903">Direct protein sequencing</keyword>
<keyword id="KW-0378">Hydrolase</keyword>
<keyword id="KW-0442">Lipid degradation</keyword>
<keyword id="KW-0443">Lipid metabolism</keyword>
<keyword id="KW-0479">Metal-binding</keyword>
<keyword id="KW-0528">Neurotoxin</keyword>
<keyword id="KW-0638">Presynaptic neurotoxin</keyword>
<keyword id="KW-0964">Secreted</keyword>
<keyword id="KW-0800">Toxin</keyword>
<reference key="1">
    <citation type="journal article" date="1991" name="Toxicon">
        <title>Studies on the venom components of the long-glanded coral snake, Maticora bivirgata.</title>
        <authorList>
            <person name="Takasaki C."/>
            <person name="Yoshida H."/>
            <person name="Shimazu T."/>
            <person name="Teruuchi T."/>
            <person name="Toriba M."/>
            <person name="Tamiya N."/>
        </authorList>
    </citation>
    <scope>PROTEIN SEQUENCE</scope>
    <source>
        <tissue>Venom</tissue>
    </source>
</reference>
<dbReference type="EC" id="3.1.1.4"/>
<dbReference type="PIR" id="B39558">
    <property type="entry name" value="B39558"/>
</dbReference>
<dbReference type="SMR" id="P24645"/>
<dbReference type="GO" id="GO:0005576">
    <property type="term" value="C:extracellular region"/>
    <property type="evidence" value="ECO:0007669"/>
    <property type="project" value="UniProtKB-SubCell"/>
</dbReference>
<dbReference type="GO" id="GO:0005509">
    <property type="term" value="F:calcium ion binding"/>
    <property type="evidence" value="ECO:0007669"/>
    <property type="project" value="InterPro"/>
</dbReference>
<dbReference type="GO" id="GO:0004623">
    <property type="term" value="F:phospholipase A2 activity"/>
    <property type="evidence" value="ECO:0007669"/>
    <property type="project" value="UniProtKB-EC"/>
</dbReference>
<dbReference type="GO" id="GO:0090729">
    <property type="term" value="F:toxin activity"/>
    <property type="evidence" value="ECO:0007669"/>
    <property type="project" value="UniProtKB-KW"/>
</dbReference>
<dbReference type="GO" id="GO:0050482">
    <property type="term" value="P:arachidonate secretion"/>
    <property type="evidence" value="ECO:0007669"/>
    <property type="project" value="InterPro"/>
</dbReference>
<dbReference type="GO" id="GO:0016042">
    <property type="term" value="P:lipid catabolic process"/>
    <property type="evidence" value="ECO:0007669"/>
    <property type="project" value="UniProtKB-KW"/>
</dbReference>
<dbReference type="GO" id="GO:0006644">
    <property type="term" value="P:phospholipid metabolic process"/>
    <property type="evidence" value="ECO:0007669"/>
    <property type="project" value="InterPro"/>
</dbReference>
<dbReference type="Gene3D" id="1.20.90.10">
    <property type="entry name" value="Phospholipase A2 domain"/>
    <property type="match status" value="1"/>
</dbReference>
<dbReference type="InterPro" id="IPR001211">
    <property type="entry name" value="PLipase_A2"/>
</dbReference>
<dbReference type="InterPro" id="IPR016090">
    <property type="entry name" value="PLipase_A2_dom"/>
</dbReference>
<dbReference type="InterPro" id="IPR036444">
    <property type="entry name" value="PLipase_A2_dom_sf"/>
</dbReference>
<dbReference type="Pfam" id="PF00068">
    <property type="entry name" value="Phospholip_A2_1"/>
    <property type="match status" value="1"/>
</dbReference>
<dbReference type="PRINTS" id="PR00389">
    <property type="entry name" value="PHPHLIPASEA2"/>
</dbReference>
<dbReference type="SUPFAM" id="SSF48619">
    <property type="entry name" value="Phospholipase A2, PLA2"/>
    <property type="match status" value="1"/>
</dbReference>
<comment type="function">
    <text>Snake venom phospholipase A2 (PLA2) that inhibits neuromuscular transmission by blocking acetylcholine release from the nerve termini. PLA2 catalyzes the calcium-dependent hydrolysis of the 2-acyl groups in 3-sn-phosphoglycerides.</text>
</comment>
<comment type="catalytic activity">
    <reaction evidence="2 3">
        <text>a 1,2-diacyl-sn-glycero-3-phosphocholine + H2O = a 1-acyl-sn-glycero-3-phosphocholine + a fatty acid + H(+)</text>
        <dbReference type="Rhea" id="RHEA:15801"/>
        <dbReference type="ChEBI" id="CHEBI:15377"/>
        <dbReference type="ChEBI" id="CHEBI:15378"/>
        <dbReference type="ChEBI" id="CHEBI:28868"/>
        <dbReference type="ChEBI" id="CHEBI:57643"/>
        <dbReference type="ChEBI" id="CHEBI:58168"/>
        <dbReference type="EC" id="3.1.1.4"/>
    </reaction>
</comment>
<comment type="cofactor">
    <cofactor evidence="1">
        <name>Ca(2+)</name>
        <dbReference type="ChEBI" id="CHEBI:29108"/>
    </cofactor>
    <text evidence="1">Binds 1 Ca(2+) ion.</text>
</comment>
<comment type="subcellular location">
    <subcellularLocation>
        <location>Secreted</location>
    </subcellularLocation>
</comment>
<comment type="tissue specificity">
    <text>Expressed by the venom gland.</text>
</comment>
<comment type="similarity">
    <text evidence="4">Belongs to the phospholipase A2 family. Group I subfamily.</text>
</comment>
<proteinExistence type="evidence at protein level"/>
<name>PA22_CALBG</name>
<protein>
    <recommendedName>
        <fullName>Phospholipase A2 2</fullName>
        <shortName>svPLA2</shortName>
        <ecNumber>3.1.1.4</ecNumber>
    </recommendedName>
    <alternativeName>
        <fullName>Phosphatidylcholine 2-acylhydrolase</fullName>
    </alternativeName>
    <alternativeName>
        <fullName>Phospholipase A2 isozyme II</fullName>
    </alternativeName>
</protein>